<name>CYRIA_CHICK</name>
<keyword id="KW-0449">Lipoprotein</keyword>
<keyword id="KW-0472">Membrane</keyword>
<keyword id="KW-1185">Reference proteome</keyword>
<dbReference type="EMBL" id="AJ720980">
    <property type="protein sequence ID" value="CAG32639.1"/>
    <property type="molecule type" value="mRNA"/>
</dbReference>
<dbReference type="RefSeq" id="NP_001006418.1">
    <property type="nucleotide sequence ID" value="NM_001006418.2"/>
</dbReference>
<dbReference type="RefSeq" id="XP_015131540.1">
    <property type="nucleotide sequence ID" value="XM_015276054.1"/>
</dbReference>
<dbReference type="RefSeq" id="XP_015131541.1">
    <property type="nucleotide sequence ID" value="XM_015276055.1"/>
</dbReference>
<dbReference type="RefSeq" id="XP_015131542.1">
    <property type="nucleotide sequence ID" value="XM_015276056.1"/>
</dbReference>
<dbReference type="SMR" id="Q5ZI04"/>
<dbReference type="FunCoup" id="Q5ZI04">
    <property type="interactions" value="20"/>
</dbReference>
<dbReference type="STRING" id="9031.ENSGALP00000049391"/>
<dbReference type="PaxDb" id="9031-ENSGALP00000026511"/>
<dbReference type="Ensembl" id="ENSGALT00010005295.1">
    <property type="protein sequence ID" value="ENSGALP00010003134.1"/>
    <property type="gene ID" value="ENSGALG00010002341.1"/>
</dbReference>
<dbReference type="GeneID" id="421949"/>
<dbReference type="KEGG" id="gga:421949"/>
<dbReference type="CTD" id="378872"/>
<dbReference type="VEuPathDB" id="HostDB:geneid_421949"/>
<dbReference type="eggNOG" id="KOG3951">
    <property type="taxonomic scope" value="Eukaryota"/>
</dbReference>
<dbReference type="GeneTree" id="ENSGT00390000015159"/>
<dbReference type="HOGENOM" id="CLU_056470_0_0_1"/>
<dbReference type="InParanoid" id="Q5ZI04"/>
<dbReference type="OrthoDB" id="60973at2759"/>
<dbReference type="PhylomeDB" id="Q5ZI04"/>
<dbReference type="TreeFam" id="TF314541"/>
<dbReference type="PRO" id="PR:Q5ZI04"/>
<dbReference type="Proteomes" id="UP000000539">
    <property type="component" value="Chromosome 3"/>
</dbReference>
<dbReference type="Bgee" id="ENSGALG00000016463">
    <property type="expression patterns" value="Expressed in spleen and 14 other cell types or tissues"/>
</dbReference>
<dbReference type="GO" id="GO:0016020">
    <property type="term" value="C:membrane"/>
    <property type="evidence" value="ECO:0007669"/>
    <property type="project" value="UniProtKB-SubCell"/>
</dbReference>
<dbReference type="GO" id="GO:0031267">
    <property type="term" value="F:small GTPase binding"/>
    <property type="evidence" value="ECO:0007669"/>
    <property type="project" value="InterPro"/>
</dbReference>
<dbReference type="GO" id="GO:0030833">
    <property type="term" value="P:regulation of actin filament polymerization"/>
    <property type="evidence" value="ECO:0007669"/>
    <property type="project" value="InterPro"/>
</dbReference>
<dbReference type="InterPro" id="IPR039789">
    <property type="entry name" value="CYRI"/>
</dbReference>
<dbReference type="InterPro" id="IPR009828">
    <property type="entry name" value="CYRIA/CYRIB_Rac1-bd"/>
</dbReference>
<dbReference type="PANTHER" id="PTHR12422">
    <property type="entry name" value="GH09096P"/>
    <property type="match status" value="1"/>
</dbReference>
<dbReference type="Pfam" id="PF07159">
    <property type="entry name" value="CYRIA-B_Rac1-bd"/>
    <property type="match status" value="1"/>
</dbReference>
<organism>
    <name type="scientific">Gallus gallus</name>
    <name type="common">Chicken</name>
    <dbReference type="NCBI Taxonomy" id="9031"/>
    <lineage>
        <taxon>Eukaryota</taxon>
        <taxon>Metazoa</taxon>
        <taxon>Chordata</taxon>
        <taxon>Craniata</taxon>
        <taxon>Vertebrata</taxon>
        <taxon>Euteleostomi</taxon>
        <taxon>Archelosauria</taxon>
        <taxon>Archosauria</taxon>
        <taxon>Dinosauria</taxon>
        <taxon>Saurischia</taxon>
        <taxon>Theropoda</taxon>
        <taxon>Coelurosauria</taxon>
        <taxon>Aves</taxon>
        <taxon>Neognathae</taxon>
        <taxon>Galloanserae</taxon>
        <taxon>Galliformes</taxon>
        <taxon>Phasianidae</taxon>
        <taxon>Phasianinae</taxon>
        <taxon>Gallus</taxon>
    </lineage>
</organism>
<accession>Q5ZI04</accession>
<protein>
    <recommendedName>
        <fullName>CYFIP-related Rac1 interactor A</fullName>
    </recommendedName>
</protein>
<proteinExistence type="evidence at transcript level"/>
<sequence length="323" mass="37314">MGNLLKVLTREIENYPHFFLDFENAQPTDGEREVWNQISAVLQDSESMLADLQAYKGAGQEIRDAIQNPNDIQLQEKAWNSVCPLVVRLKRFYEFSLRLEKALQSLLESLTCPPYTPTQHLEREQALAKEFAEILHFTLRFDELKMRNPAIQNDFSYYRRTISRNRINNMHLDIENEVNNEMANRMSLFYAEATPMLKTLSNATTHFVSENKTLPIENTTDCLSTMASVCKVMLETPEYRSRFTSEETLMFCMRVMVGVIILYDHVHPVGAFSKTSKIDMKGCIKVLKEQPPDTVEGLLNALRFTTKHLNDESTSKQIRAMLQ</sequence>
<feature type="chain" id="PRO_0000291882" description="CYFIP-related Rac1 interactor A">
    <location>
        <begin position="1"/>
        <end position="323"/>
    </location>
</feature>
<reference key="1">
    <citation type="journal article" date="2005" name="Genome Biol.">
        <title>Full-length cDNAs from chicken bursal lymphocytes to facilitate gene function analysis.</title>
        <authorList>
            <person name="Caldwell R.B."/>
            <person name="Kierzek A.M."/>
            <person name="Arakawa H."/>
            <person name="Bezzubov Y."/>
            <person name="Zaim J."/>
            <person name="Fiedler P."/>
            <person name="Kutter S."/>
            <person name="Blagodatski A."/>
            <person name="Kostovska D."/>
            <person name="Koter M."/>
            <person name="Plachy J."/>
            <person name="Carninci P."/>
            <person name="Hayashizaki Y."/>
            <person name="Buerstedde J.-M."/>
        </authorList>
    </citation>
    <scope>NUCLEOTIDE SEQUENCE [LARGE SCALE MRNA]</scope>
    <source>
        <strain>CB</strain>
        <tissue>Bursa of Fabricius</tissue>
    </source>
</reference>
<evidence type="ECO:0000250" key="1">
    <source>
        <dbReference type="UniProtKB" id="Q9H0Q0"/>
    </source>
</evidence>
<evidence type="ECO:0000250" key="2">
    <source>
        <dbReference type="UniProtKB" id="Q9NUQ9"/>
    </source>
</evidence>
<evidence type="ECO:0000305" key="3"/>
<gene>
    <name type="primary">CYRIA</name>
    <name type="synonym">FAM49A</name>
    <name type="ORF">RCJMB04_31l4</name>
</gene>
<comment type="function">
    <text evidence="1">May negatively regulate RAC1 signaling and RAC1-driven cytoskeletal remodeling. May regulate chemotaxis, cell migration and epithelial polarization by controlling the polarity, plasticity, duration and extent of protrusions.</text>
</comment>
<comment type="subcellular location">
    <subcellularLocation>
        <location evidence="2">Membrane</location>
        <topology evidence="2">Lipid-anchor</topology>
    </subcellularLocation>
</comment>
<comment type="similarity">
    <text evidence="3">Belongs to the CYRI family.</text>
</comment>